<name>RL2_ECOK1</name>
<organism>
    <name type="scientific">Escherichia coli O1:K1 / APEC</name>
    <dbReference type="NCBI Taxonomy" id="405955"/>
    <lineage>
        <taxon>Bacteria</taxon>
        <taxon>Pseudomonadati</taxon>
        <taxon>Pseudomonadota</taxon>
        <taxon>Gammaproteobacteria</taxon>
        <taxon>Enterobacterales</taxon>
        <taxon>Enterobacteriaceae</taxon>
        <taxon>Escherichia</taxon>
    </lineage>
</organism>
<keyword id="KW-0007">Acetylation</keyword>
<keyword id="KW-1185">Reference proteome</keyword>
<keyword id="KW-0687">Ribonucleoprotein</keyword>
<keyword id="KW-0689">Ribosomal protein</keyword>
<keyword id="KW-0694">RNA-binding</keyword>
<keyword id="KW-0699">rRNA-binding</keyword>
<evidence type="ECO:0000255" key="1">
    <source>
        <dbReference type="HAMAP-Rule" id="MF_01320"/>
    </source>
</evidence>
<evidence type="ECO:0000256" key="2">
    <source>
        <dbReference type="SAM" id="MobiDB-lite"/>
    </source>
</evidence>
<evidence type="ECO:0000305" key="3"/>
<reference key="1">
    <citation type="journal article" date="2007" name="J. Bacteriol.">
        <title>The genome sequence of avian pathogenic Escherichia coli strain O1:K1:H7 shares strong similarities with human extraintestinal pathogenic E. coli genomes.</title>
        <authorList>
            <person name="Johnson T.J."/>
            <person name="Kariyawasam S."/>
            <person name="Wannemuehler Y."/>
            <person name="Mangiamele P."/>
            <person name="Johnson S.J."/>
            <person name="Doetkott C."/>
            <person name="Skyberg J.A."/>
            <person name="Lynne A.M."/>
            <person name="Johnson J.R."/>
            <person name="Nolan L.K."/>
        </authorList>
    </citation>
    <scope>NUCLEOTIDE SEQUENCE [LARGE SCALE GENOMIC DNA]</scope>
</reference>
<protein>
    <recommendedName>
        <fullName evidence="1">Large ribosomal subunit protein uL2</fullName>
    </recommendedName>
    <alternativeName>
        <fullName evidence="3">50S ribosomal protein L2</fullName>
    </alternativeName>
</protein>
<dbReference type="EMBL" id="CP000468">
    <property type="protein sequence ID" value="ABJ02795.1"/>
    <property type="molecule type" value="Genomic_DNA"/>
</dbReference>
<dbReference type="RefSeq" id="WP_000301864.1">
    <property type="nucleotide sequence ID" value="NZ_CADILS010000044.1"/>
</dbReference>
<dbReference type="SMR" id="A1AGK5"/>
<dbReference type="GeneID" id="93778670"/>
<dbReference type="KEGG" id="ecv:APECO1_3133"/>
<dbReference type="HOGENOM" id="CLU_036235_2_1_6"/>
<dbReference type="Proteomes" id="UP000008216">
    <property type="component" value="Chromosome"/>
</dbReference>
<dbReference type="GO" id="GO:0005829">
    <property type="term" value="C:cytosol"/>
    <property type="evidence" value="ECO:0007669"/>
    <property type="project" value="UniProtKB-ARBA"/>
</dbReference>
<dbReference type="GO" id="GO:0015934">
    <property type="term" value="C:large ribosomal subunit"/>
    <property type="evidence" value="ECO:0007669"/>
    <property type="project" value="InterPro"/>
</dbReference>
<dbReference type="GO" id="GO:0019843">
    <property type="term" value="F:rRNA binding"/>
    <property type="evidence" value="ECO:0007669"/>
    <property type="project" value="UniProtKB-UniRule"/>
</dbReference>
<dbReference type="GO" id="GO:0003735">
    <property type="term" value="F:structural constituent of ribosome"/>
    <property type="evidence" value="ECO:0007669"/>
    <property type="project" value="InterPro"/>
</dbReference>
<dbReference type="GO" id="GO:0016740">
    <property type="term" value="F:transferase activity"/>
    <property type="evidence" value="ECO:0007669"/>
    <property type="project" value="InterPro"/>
</dbReference>
<dbReference type="GO" id="GO:0002181">
    <property type="term" value="P:cytoplasmic translation"/>
    <property type="evidence" value="ECO:0007669"/>
    <property type="project" value="TreeGrafter"/>
</dbReference>
<dbReference type="FunFam" id="2.30.30.30:FF:000001">
    <property type="entry name" value="50S ribosomal protein L2"/>
    <property type="match status" value="1"/>
</dbReference>
<dbReference type="FunFam" id="2.40.50.140:FF:000003">
    <property type="entry name" value="50S ribosomal protein L2"/>
    <property type="match status" value="1"/>
</dbReference>
<dbReference type="FunFam" id="4.10.950.10:FF:000001">
    <property type="entry name" value="50S ribosomal protein L2"/>
    <property type="match status" value="1"/>
</dbReference>
<dbReference type="Gene3D" id="2.30.30.30">
    <property type="match status" value="1"/>
</dbReference>
<dbReference type="Gene3D" id="2.40.50.140">
    <property type="entry name" value="Nucleic acid-binding proteins"/>
    <property type="match status" value="1"/>
</dbReference>
<dbReference type="Gene3D" id="4.10.950.10">
    <property type="entry name" value="Ribosomal protein L2, domain 3"/>
    <property type="match status" value="1"/>
</dbReference>
<dbReference type="HAMAP" id="MF_01320_B">
    <property type="entry name" value="Ribosomal_uL2_B"/>
    <property type="match status" value="1"/>
</dbReference>
<dbReference type="InterPro" id="IPR012340">
    <property type="entry name" value="NA-bd_OB-fold"/>
</dbReference>
<dbReference type="InterPro" id="IPR014722">
    <property type="entry name" value="Rib_uL2_dom2"/>
</dbReference>
<dbReference type="InterPro" id="IPR002171">
    <property type="entry name" value="Ribosomal_uL2"/>
</dbReference>
<dbReference type="InterPro" id="IPR005880">
    <property type="entry name" value="Ribosomal_uL2_bac/org-type"/>
</dbReference>
<dbReference type="InterPro" id="IPR022669">
    <property type="entry name" value="Ribosomal_uL2_C"/>
</dbReference>
<dbReference type="InterPro" id="IPR022671">
    <property type="entry name" value="Ribosomal_uL2_CS"/>
</dbReference>
<dbReference type="InterPro" id="IPR014726">
    <property type="entry name" value="Ribosomal_uL2_dom3"/>
</dbReference>
<dbReference type="InterPro" id="IPR022666">
    <property type="entry name" value="Ribosomal_uL2_RNA-bd_dom"/>
</dbReference>
<dbReference type="InterPro" id="IPR008991">
    <property type="entry name" value="Translation_prot_SH3-like_sf"/>
</dbReference>
<dbReference type="NCBIfam" id="TIGR01171">
    <property type="entry name" value="rplB_bact"/>
    <property type="match status" value="1"/>
</dbReference>
<dbReference type="PANTHER" id="PTHR13691:SF5">
    <property type="entry name" value="LARGE RIBOSOMAL SUBUNIT PROTEIN UL2M"/>
    <property type="match status" value="1"/>
</dbReference>
<dbReference type="PANTHER" id="PTHR13691">
    <property type="entry name" value="RIBOSOMAL PROTEIN L2"/>
    <property type="match status" value="1"/>
</dbReference>
<dbReference type="Pfam" id="PF00181">
    <property type="entry name" value="Ribosomal_L2"/>
    <property type="match status" value="1"/>
</dbReference>
<dbReference type="Pfam" id="PF03947">
    <property type="entry name" value="Ribosomal_L2_C"/>
    <property type="match status" value="1"/>
</dbReference>
<dbReference type="PIRSF" id="PIRSF002158">
    <property type="entry name" value="Ribosomal_L2"/>
    <property type="match status" value="1"/>
</dbReference>
<dbReference type="SMART" id="SM01383">
    <property type="entry name" value="Ribosomal_L2"/>
    <property type="match status" value="1"/>
</dbReference>
<dbReference type="SMART" id="SM01382">
    <property type="entry name" value="Ribosomal_L2_C"/>
    <property type="match status" value="1"/>
</dbReference>
<dbReference type="SUPFAM" id="SSF50249">
    <property type="entry name" value="Nucleic acid-binding proteins"/>
    <property type="match status" value="1"/>
</dbReference>
<dbReference type="SUPFAM" id="SSF50104">
    <property type="entry name" value="Translation proteins SH3-like domain"/>
    <property type="match status" value="1"/>
</dbReference>
<dbReference type="PROSITE" id="PS00467">
    <property type="entry name" value="RIBOSOMAL_L2"/>
    <property type="match status" value="1"/>
</dbReference>
<accession>A1AGK5</accession>
<sequence length="273" mass="29860">MAVVKCKPTSPGRRHVVKVVNPELHKGKPFAPLLEKNSKSGGRNNNGRITTRHIGGGHKQAYRIVDFKRNKDGIPAVVERLEYDPNRSANIALVLYKDGERRYILAPKGLKAGDQIQSGVDAAIKPGNTLPMRNIPVGSTVHNVEMKPGKGGQLARSAGTYVQIVARDGAYVTLRLRSGEMRKVEADCRATLGEVGNAEHMLRVLGKAGAARWRGVRPTVRGTAMNPVDHPHGGGEGRNFGKHPVTPWGVQTKGKKTRSNKRTDKFIVRRRSK</sequence>
<gene>
    <name evidence="1" type="primary">rplB</name>
    <name type="ordered locus">Ecok1_33010</name>
    <name type="ORF">APECO1_3133</name>
</gene>
<comment type="function">
    <text evidence="1">One of the primary rRNA binding proteins. Required for association of the 30S and 50S subunits to form the 70S ribosome, for tRNA binding and peptide bond formation. It has been suggested to have peptidyltransferase activity; this is somewhat controversial. Makes several contacts with the 16S rRNA in the 70S ribosome.</text>
</comment>
<comment type="subunit">
    <text evidence="1">Part of the 50S ribosomal subunit. Forms a bridge to the 30S subunit in the 70S ribosome.</text>
</comment>
<comment type="similarity">
    <text evidence="1">Belongs to the universal ribosomal protein uL2 family.</text>
</comment>
<proteinExistence type="inferred from homology"/>
<feature type="chain" id="PRO_0000309914" description="Large ribosomal subunit protein uL2">
    <location>
        <begin position="1"/>
        <end position="273"/>
    </location>
</feature>
<feature type="region of interest" description="Disordered" evidence="2">
    <location>
        <begin position="28"/>
        <end position="53"/>
    </location>
</feature>
<feature type="region of interest" description="Disordered" evidence="2">
    <location>
        <begin position="221"/>
        <end position="273"/>
    </location>
</feature>
<feature type="compositionally biased region" description="Low complexity" evidence="2">
    <location>
        <begin position="39"/>
        <end position="48"/>
    </location>
</feature>
<feature type="modified residue" description="N6-acetyllysine" evidence="1">
    <location>
        <position position="242"/>
    </location>
</feature>